<proteinExistence type="inferred from homology"/>
<dbReference type="EC" id="2.4.2.7" evidence="1"/>
<dbReference type="EMBL" id="CP000792">
    <property type="protein sequence ID" value="EAT98944.1"/>
    <property type="molecule type" value="Genomic_DNA"/>
</dbReference>
<dbReference type="RefSeq" id="WP_012001447.1">
    <property type="nucleotide sequence ID" value="NC_009802.2"/>
</dbReference>
<dbReference type="SMR" id="A7ZCG7"/>
<dbReference type="STRING" id="360104.CCC13826_1608"/>
<dbReference type="KEGG" id="cco:CCC13826_1608"/>
<dbReference type="eggNOG" id="COG0503">
    <property type="taxonomic scope" value="Bacteria"/>
</dbReference>
<dbReference type="HOGENOM" id="CLU_063339_3_0_7"/>
<dbReference type="OrthoDB" id="9803963at2"/>
<dbReference type="UniPathway" id="UPA00588">
    <property type="reaction ID" value="UER00646"/>
</dbReference>
<dbReference type="Proteomes" id="UP000001121">
    <property type="component" value="Chromosome"/>
</dbReference>
<dbReference type="GO" id="GO:0005737">
    <property type="term" value="C:cytoplasm"/>
    <property type="evidence" value="ECO:0007669"/>
    <property type="project" value="UniProtKB-SubCell"/>
</dbReference>
<dbReference type="GO" id="GO:0002055">
    <property type="term" value="F:adenine binding"/>
    <property type="evidence" value="ECO:0007669"/>
    <property type="project" value="TreeGrafter"/>
</dbReference>
<dbReference type="GO" id="GO:0003999">
    <property type="term" value="F:adenine phosphoribosyltransferase activity"/>
    <property type="evidence" value="ECO:0007669"/>
    <property type="project" value="UniProtKB-UniRule"/>
</dbReference>
<dbReference type="GO" id="GO:0016208">
    <property type="term" value="F:AMP binding"/>
    <property type="evidence" value="ECO:0007669"/>
    <property type="project" value="TreeGrafter"/>
</dbReference>
<dbReference type="GO" id="GO:0006168">
    <property type="term" value="P:adenine salvage"/>
    <property type="evidence" value="ECO:0007669"/>
    <property type="project" value="InterPro"/>
</dbReference>
<dbReference type="GO" id="GO:0044209">
    <property type="term" value="P:AMP salvage"/>
    <property type="evidence" value="ECO:0007669"/>
    <property type="project" value="UniProtKB-UniRule"/>
</dbReference>
<dbReference type="GO" id="GO:0006166">
    <property type="term" value="P:purine ribonucleoside salvage"/>
    <property type="evidence" value="ECO:0007669"/>
    <property type="project" value="UniProtKB-KW"/>
</dbReference>
<dbReference type="CDD" id="cd06223">
    <property type="entry name" value="PRTases_typeI"/>
    <property type="match status" value="1"/>
</dbReference>
<dbReference type="FunFam" id="3.40.50.2020:FF:000021">
    <property type="entry name" value="Adenine phosphoribosyltransferase"/>
    <property type="match status" value="1"/>
</dbReference>
<dbReference type="Gene3D" id="3.40.50.2020">
    <property type="match status" value="1"/>
</dbReference>
<dbReference type="HAMAP" id="MF_00004">
    <property type="entry name" value="Aden_phosphoribosyltr"/>
    <property type="match status" value="1"/>
</dbReference>
<dbReference type="InterPro" id="IPR005764">
    <property type="entry name" value="Ade_phspho_trans"/>
</dbReference>
<dbReference type="InterPro" id="IPR000836">
    <property type="entry name" value="PRibTrfase_dom"/>
</dbReference>
<dbReference type="InterPro" id="IPR029057">
    <property type="entry name" value="PRTase-like"/>
</dbReference>
<dbReference type="InterPro" id="IPR050054">
    <property type="entry name" value="UPRTase/APRTase"/>
</dbReference>
<dbReference type="NCBIfam" id="TIGR01090">
    <property type="entry name" value="apt"/>
    <property type="match status" value="1"/>
</dbReference>
<dbReference type="NCBIfam" id="NF002634">
    <property type="entry name" value="PRK02304.1-3"/>
    <property type="match status" value="1"/>
</dbReference>
<dbReference type="NCBIfam" id="NF002636">
    <property type="entry name" value="PRK02304.1-5"/>
    <property type="match status" value="1"/>
</dbReference>
<dbReference type="PANTHER" id="PTHR32315">
    <property type="entry name" value="ADENINE PHOSPHORIBOSYLTRANSFERASE"/>
    <property type="match status" value="1"/>
</dbReference>
<dbReference type="PANTHER" id="PTHR32315:SF3">
    <property type="entry name" value="ADENINE PHOSPHORIBOSYLTRANSFERASE"/>
    <property type="match status" value="1"/>
</dbReference>
<dbReference type="Pfam" id="PF00156">
    <property type="entry name" value="Pribosyltran"/>
    <property type="match status" value="1"/>
</dbReference>
<dbReference type="SUPFAM" id="SSF53271">
    <property type="entry name" value="PRTase-like"/>
    <property type="match status" value="1"/>
</dbReference>
<dbReference type="PROSITE" id="PS00103">
    <property type="entry name" value="PUR_PYR_PR_TRANSFER"/>
    <property type="match status" value="1"/>
</dbReference>
<keyword id="KW-0963">Cytoplasm</keyword>
<keyword id="KW-0328">Glycosyltransferase</keyword>
<keyword id="KW-0660">Purine salvage</keyword>
<keyword id="KW-0808">Transferase</keyword>
<organism>
    <name type="scientific">Campylobacter concisus (strain 13826)</name>
    <dbReference type="NCBI Taxonomy" id="360104"/>
    <lineage>
        <taxon>Bacteria</taxon>
        <taxon>Pseudomonadati</taxon>
        <taxon>Campylobacterota</taxon>
        <taxon>Epsilonproteobacteria</taxon>
        <taxon>Campylobacterales</taxon>
        <taxon>Campylobacteraceae</taxon>
        <taxon>Campylobacter</taxon>
    </lineage>
</organism>
<reference key="1">
    <citation type="submission" date="2007-10" db="EMBL/GenBank/DDBJ databases">
        <title>Genome sequence of Campylobacter concisus 13826 isolated from human feces.</title>
        <authorList>
            <person name="Fouts D.E."/>
            <person name="Mongodin E.F."/>
            <person name="Puiu D."/>
            <person name="Sebastian Y."/>
            <person name="Miller W.G."/>
            <person name="Mandrell R.E."/>
            <person name="On S."/>
            <person name="Nelson K.E."/>
        </authorList>
    </citation>
    <scope>NUCLEOTIDE SEQUENCE [LARGE SCALE GENOMIC DNA]</scope>
    <source>
        <strain>13826</strain>
    </source>
</reference>
<evidence type="ECO:0000255" key="1">
    <source>
        <dbReference type="HAMAP-Rule" id="MF_00004"/>
    </source>
</evidence>
<accession>A7ZCG7</accession>
<gene>
    <name evidence="1" type="primary">apt</name>
    <name type="ordered locus">Ccon26_05870</name>
    <name type="ORF">CCC13826_1608</name>
</gene>
<sequence length="182" mass="20253">MKILDQKGKEFLLNSIRCINDFPKPGIVFRDITTLLNNKEAFNFLIDHLAARYEDANIDYIAGIESRGFIFGAALAARLRLPFVPIRKPKKLPFITLSQKYSLEYGVDEVQIHIDAFGEKAGARVLLMDDLIATGGTAKASVELINQTNATCVEACFLIDLVDLKGSEKLKSLTKIYSVLEV</sequence>
<name>APT_CAMC1</name>
<feature type="chain" id="PRO_1000000266" description="Adenine phosphoribosyltransferase">
    <location>
        <begin position="1"/>
        <end position="182"/>
    </location>
</feature>
<protein>
    <recommendedName>
        <fullName evidence="1">Adenine phosphoribosyltransferase</fullName>
        <shortName evidence="1">APRT</shortName>
        <ecNumber evidence="1">2.4.2.7</ecNumber>
    </recommendedName>
</protein>
<comment type="function">
    <text evidence="1">Catalyzes a salvage reaction resulting in the formation of AMP, that is energically less costly than de novo synthesis.</text>
</comment>
<comment type="catalytic activity">
    <reaction evidence="1">
        <text>AMP + diphosphate = 5-phospho-alpha-D-ribose 1-diphosphate + adenine</text>
        <dbReference type="Rhea" id="RHEA:16609"/>
        <dbReference type="ChEBI" id="CHEBI:16708"/>
        <dbReference type="ChEBI" id="CHEBI:33019"/>
        <dbReference type="ChEBI" id="CHEBI:58017"/>
        <dbReference type="ChEBI" id="CHEBI:456215"/>
        <dbReference type="EC" id="2.4.2.7"/>
    </reaction>
</comment>
<comment type="pathway">
    <text evidence="1">Purine metabolism; AMP biosynthesis via salvage pathway; AMP from adenine: step 1/1.</text>
</comment>
<comment type="subunit">
    <text evidence="1">Homodimer.</text>
</comment>
<comment type="subcellular location">
    <subcellularLocation>
        <location evidence="1">Cytoplasm</location>
    </subcellularLocation>
</comment>
<comment type="similarity">
    <text evidence="1">Belongs to the purine/pyrimidine phosphoribosyltransferase family.</text>
</comment>